<dbReference type="EMBL" id="AM406671">
    <property type="protein sequence ID" value="CAL97500.1"/>
    <property type="molecule type" value="Genomic_DNA"/>
</dbReference>
<dbReference type="RefSeq" id="WP_011676633.1">
    <property type="nucleotide sequence ID" value="NC_009004.1"/>
</dbReference>
<dbReference type="PDB" id="5MYJ">
    <property type="method" value="EM"/>
    <property type="resolution" value="5.60 A"/>
    <property type="chains" value="B3=1-81"/>
</dbReference>
<dbReference type="PDBsum" id="5MYJ"/>
<dbReference type="EMDB" id="EMD-3581"/>
<dbReference type="SMR" id="A2RJP7"/>
<dbReference type="STRING" id="416870.llmg_0906"/>
<dbReference type="GeneID" id="61109836"/>
<dbReference type="KEGG" id="llm:llmg_0906"/>
<dbReference type="eggNOG" id="COG0254">
    <property type="taxonomic scope" value="Bacteria"/>
</dbReference>
<dbReference type="HOGENOM" id="CLU_114306_2_2_9"/>
<dbReference type="OrthoDB" id="9803251at2"/>
<dbReference type="PhylomeDB" id="A2RJP7"/>
<dbReference type="Proteomes" id="UP000000364">
    <property type="component" value="Chromosome"/>
</dbReference>
<dbReference type="GO" id="GO:1990904">
    <property type="term" value="C:ribonucleoprotein complex"/>
    <property type="evidence" value="ECO:0007669"/>
    <property type="project" value="UniProtKB-KW"/>
</dbReference>
<dbReference type="GO" id="GO:0005840">
    <property type="term" value="C:ribosome"/>
    <property type="evidence" value="ECO:0007669"/>
    <property type="project" value="UniProtKB-KW"/>
</dbReference>
<dbReference type="GO" id="GO:0003735">
    <property type="term" value="F:structural constituent of ribosome"/>
    <property type="evidence" value="ECO:0007669"/>
    <property type="project" value="InterPro"/>
</dbReference>
<dbReference type="GO" id="GO:0006412">
    <property type="term" value="P:translation"/>
    <property type="evidence" value="ECO:0007669"/>
    <property type="project" value="UniProtKB-UniRule"/>
</dbReference>
<dbReference type="Gene3D" id="4.10.830.30">
    <property type="entry name" value="Ribosomal protein L31"/>
    <property type="match status" value="1"/>
</dbReference>
<dbReference type="HAMAP" id="MF_00502">
    <property type="entry name" value="Ribosomal_bL31_2"/>
    <property type="match status" value="1"/>
</dbReference>
<dbReference type="InterPro" id="IPR034704">
    <property type="entry name" value="Ribosomal_bL28/bL31-like_sf"/>
</dbReference>
<dbReference type="InterPro" id="IPR002150">
    <property type="entry name" value="Ribosomal_bL31"/>
</dbReference>
<dbReference type="InterPro" id="IPR027493">
    <property type="entry name" value="Ribosomal_bL31_B"/>
</dbReference>
<dbReference type="InterPro" id="IPR042105">
    <property type="entry name" value="Ribosomal_bL31_sf"/>
</dbReference>
<dbReference type="NCBIfam" id="TIGR00105">
    <property type="entry name" value="L31"/>
    <property type="match status" value="1"/>
</dbReference>
<dbReference type="NCBIfam" id="NF002462">
    <property type="entry name" value="PRK01678.1"/>
    <property type="match status" value="1"/>
</dbReference>
<dbReference type="PANTHER" id="PTHR33280">
    <property type="entry name" value="50S RIBOSOMAL PROTEIN L31, CHLOROPLASTIC"/>
    <property type="match status" value="1"/>
</dbReference>
<dbReference type="PANTHER" id="PTHR33280:SF1">
    <property type="entry name" value="LARGE RIBOSOMAL SUBUNIT PROTEIN BL31C"/>
    <property type="match status" value="1"/>
</dbReference>
<dbReference type="Pfam" id="PF01197">
    <property type="entry name" value="Ribosomal_L31"/>
    <property type="match status" value="1"/>
</dbReference>
<dbReference type="PRINTS" id="PR01249">
    <property type="entry name" value="RIBOSOMALL31"/>
</dbReference>
<dbReference type="SUPFAM" id="SSF143800">
    <property type="entry name" value="L28p-like"/>
    <property type="match status" value="1"/>
</dbReference>
<dbReference type="PROSITE" id="PS01143">
    <property type="entry name" value="RIBOSOMAL_L31"/>
    <property type="match status" value="1"/>
</dbReference>
<keyword id="KW-0002">3D-structure</keyword>
<keyword id="KW-0687">Ribonucleoprotein</keyword>
<keyword id="KW-0689">Ribosomal protein</keyword>
<comment type="subunit">
    <text evidence="1">Part of the 50S ribosomal subunit.</text>
</comment>
<comment type="similarity">
    <text evidence="1">Belongs to the bacterial ribosomal protein bL31 family. Type B subfamily.</text>
</comment>
<organism>
    <name type="scientific">Lactococcus lactis subsp. cremoris (strain MG1363)</name>
    <dbReference type="NCBI Taxonomy" id="416870"/>
    <lineage>
        <taxon>Bacteria</taxon>
        <taxon>Bacillati</taxon>
        <taxon>Bacillota</taxon>
        <taxon>Bacilli</taxon>
        <taxon>Lactobacillales</taxon>
        <taxon>Streptococcaceae</taxon>
        <taxon>Lactococcus</taxon>
        <taxon>Lactococcus cremoris subsp. cremoris</taxon>
    </lineage>
</organism>
<sequence>MKQNIHPNYQPVVFMDTTTGYKFLTGSTKGSKETVEWEDGNTYPLIRVEISSDSHPFYTGRQKFQAADGRIARFEKKYGKQ</sequence>
<protein>
    <recommendedName>
        <fullName evidence="1">Large ribosomal subunit protein bL31B</fullName>
    </recommendedName>
    <alternativeName>
        <fullName evidence="2">50S ribosomal protein L31 type B</fullName>
    </alternativeName>
</protein>
<gene>
    <name evidence="1" type="primary">rpmE2</name>
    <name type="ordered locus">llmg_0906</name>
</gene>
<name>RL31B_LACLM</name>
<reference key="1">
    <citation type="journal article" date="2007" name="J. Bacteriol.">
        <title>The complete genome sequence of the lactic acid bacterial paradigm Lactococcus lactis subsp. cremoris MG1363.</title>
        <authorList>
            <person name="Wegmann U."/>
            <person name="O'Connell-Motherway M."/>
            <person name="Zomer A."/>
            <person name="Buist G."/>
            <person name="Shearman C."/>
            <person name="Canchaya C."/>
            <person name="Ventura M."/>
            <person name="Goesmann A."/>
            <person name="Gasson M.J."/>
            <person name="Kuipers O.P."/>
            <person name="van Sinderen D."/>
            <person name="Kok J."/>
        </authorList>
    </citation>
    <scope>NUCLEOTIDE SEQUENCE [LARGE SCALE GENOMIC DNA]</scope>
    <source>
        <strain>MG1363</strain>
    </source>
</reference>
<proteinExistence type="evidence at protein level"/>
<accession>A2RJP7</accession>
<feature type="chain" id="PRO_1000014700" description="Large ribosomal subunit protein bL31B">
    <location>
        <begin position="1"/>
        <end position="81"/>
    </location>
</feature>
<evidence type="ECO:0000255" key="1">
    <source>
        <dbReference type="HAMAP-Rule" id="MF_00502"/>
    </source>
</evidence>
<evidence type="ECO:0000305" key="2"/>